<reference key="1">
    <citation type="journal article" date="1997" name="Yeast">
        <title>Analysis of a 35.6 kb region on the right arm of Saccharomyces cerevisiae chromosome XV.</title>
        <authorList>
            <person name="Bordonne R."/>
            <person name="Camasses A."/>
            <person name="Madania A."/>
            <person name="Poch O."/>
            <person name="Tarassov I.A."/>
            <person name="Winsor B."/>
            <person name="Martin R.P."/>
        </authorList>
    </citation>
    <scope>NUCLEOTIDE SEQUENCE [GENOMIC DNA]</scope>
    <source>
        <strain>S288c / FY1678</strain>
    </source>
</reference>
<reference key="2">
    <citation type="journal article" date="1997" name="Nature">
        <title>The nucleotide sequence of Saccharomyces cerevisiae chromosome XV.</title>
        <authorList>
            <person name="Dujon B."/>
            <person name="Albermann K."/>
            <person name="Aldea M."/>
            <person name="Alexandraki D."/>
            <person name="Ansorge W."/>
            <person name="Arino J."/>
            <person name="Benes V."/>
            <person name="Bohn C."/>
            <person name="Bolotin-Fukuhara M."/>
            <person name="Bordonne R."/>
            <person name="Boyer J."/>
            <person name="Camasses A."/>
            <person name="Casamayor A."/>
            <person name="Casas C."/>
            <person name="Cheret G."/>
            <person name="Cziepluch C."/>
            <person name="Daignan-Fornier B."/>
            <person name="Dang V.-D."/>
            <person name="de Haan M."/>
            <person name="Delius H."/>
            <person name="Durand P."/>
            <person name="Fairhead C."/>
            <person name="Feldmann H."/>
            <person name="Gaillon L."/>
            <person name="Galisson F."/>
            <person name="Gamo F.-J."/>
            <person name="Gancedo C."/>
            <person name="Goffeau A."/>
            <person name="Goulding S.E."/>
            <person name="Grivell L.A."/>
            <person name="Habbig B."/>
            <person name="Hand N.J."/>
            <person name="Hani J."/>
            <person name="Hattenhorst U."/>
            <person name="Hebling U."/>
            <person name="Hernando Y."/>
            <person name="Herrero E."/>
            <person name="Heumann K."/>
            <person name="Hiesel R."/>
            <person name="Hilger F."/>
            <person name="Hofmann B."/>
            <person name="Hollenberg C.P."/>
            <person name="Hughes B."/>
            <person name="Jauniaux J.-C."/>
            <person name="Kalogeropoulos A."/>
            <person name="Katsoulou C."/>
            <person name="Kordes E."/>
            <person name="Lafuente M.J."/>
            <person name="Landt O."/>
            <person name="Louis E.J."/>
            <person name="Maarse A.C."/>
            <person name="Madania A."/>
            <person name="Mannhaupt G."/>
            <person name="Marck C."/>
            <person name="Martin R.P."/>
            <person name="Mewes H.-W."/>
            <person name="Michaux G."/>
            <person name="Paces V."/>
            <person name="Parle-McDermott A.G."/>
            <person name="Pearson B.M."/>
            <person name="Perrin A."/>
            <person name="Pettersson B."/>
            <person name="Poch O."/>
            <person name="Pohl T.M."/>
            <person name="Poirey R."/>
            <person name="Portetelle D."/>
            <person name="Pujol A."/>
            <person name="Purnelle B."/>
            <person name="Ramezani Rad M."/>
            <person name="Rechmann S."/>
            <person name="Schwager C."/>
            <person name="Schweizer M."/>
            <person name="Sor F."/>
            <person name="Sterky F."/>
            <person name="Tarassov I.A."/>
            <person name="Teodoru C."/>
            <person name="Tettelin H."/>
            <person name="Thierry A."/>
            <person name="Tobiasch E."/>
            <person name="Tzermia M."/>
            <person name="Uhlen M."/>
            <person name="Unseld M."/>
            <person name="Valens M."/>
            <person name="Vandenbol M."/>
            <person name="Vetter I."/>
            <person name="Vlcek C."/>
            <person name="Voet M."/>
            <person name="Volckaert G."/>
            <person name="Voss H."/>
            <person name="Wambutt R."/>
            <person name="Wedler H."/>
            <person name="Wiemann S."/>
            <person name="Winsor B."/>
            <person name="Wolfe K.H."/>
            <person name="Zollner A."/>
            <person name="Zumstein E."/>
            <person name="Kleine K."/>
        </authorList>
    </citation>
    <scope>NUCLEOTIDE SEQUENCE [LARGE SCALE GENOMIC DNA]</scope>
    <source>
        <strain>ATCC 204508 / S288c</strain>
    </source>
</reference>
<reference key="3">
    <citation type="journal article" date="2014" name="G3 (Bethesda)">
        <title>The reference genome sequence of Saccharomyces cerevisiae: Then and now.</title>
        <authorList>
            <person name="Engel S.R."/>
            <person name="Dietrich F.S."/>
            <person name="Fisk D.G."/>
            <person name="Binkley G."/>
            <person name="Balakrishnan R."/>
            <person name="Costanzo M.C."/>
            <person name="Dwight S.S."/>
            <person name="Hitz B.C."/>
            <person name="Karra K."/>
            <person name="Nash R.S."/>
            <person name="Weng S."/>
            <person name="Wong E.D."/>
            <person name="Lloyd P."/>
            <person name="Skrzypek M.S."/>
            <person name="Miyasato S.R."/>
            <person name="Simison M."/>
            <person name="Cherry J.M."/>
        </authorList>
    </citation>
    <scope>GENOME REANNOTATION</scope>
    <source>
        <strain>ATCC 204508 / S288c</strain>
    </source>
</reference>
<reference key="4">
    <citation type="journal article" date="2003" name="Nature">
        <title>Global analysis of protein expression in yeast.</title>
        <authorList>
            <person name="Ghaemmaghami S."/>
            <person name="Huh W.-K."/>
            <person name="Bower K."/>
            <person name="Howson R.W."/>
            <person name="Belle A."/>
            <person name="Dephoure N."/>
            <person name="O'Shea E.K."/>
            <person name="Weissman J.S."/>
        </authorList>
    </citation>
    <scope>LEVEL OF PROTEIN EXPRESSION [LARGE SCALE ANALYSIS]</scope>
</reference>
<organism>
    <name type="scientific">Saccharomyces cerevisiae (strain ATCC 204508 / S288c)</name>
    <name type="common">Baker's yeast</name>
    <dbReference type="NCBI Taxonomy" id="559292"/>
    <lineage>
        <taxon>Eukaryota</taxon>
        <taxon>Fungi</taxon>
        <taxon>Dikarya</taxon>
        <taxon>Ascomycota</taxon>
        <taxon>Saccharomycotina</taxon>
        <taxon>Saccharomycetes</taxon>
        <taxon>Saccharomycetales</taxon>
        <taxon>Saccharomycetaceae</taxon>
        <taxon>Saccharomyces</taxon>
    </lineage>
</organism>
<protein>
    <recommendedName>
        <fullName>mRNA transport regulator MTR10</fullName>
    </recommendedName>
</protein>
<name>MTR10_YEAST</name>
<dbReference type="EMBL" id="U55020">
    <property type="protein sequence ID" value="AAC49646.1"/>
    <property type="molecule type" value="Genomic_DNA"/>
</dbReference>
<dbReference type="EMBL" id="Z75068">
    <property type="protein sequence ID" value="CAA99366.1"/>
    <property type="molecule type" value="Genomic_DNA"/>
</dbReference>
<dbReference type="EMBL" id="BK006948">
    <property type="protein sequence ID" value="DAA10933.1"/>
    <property type="molecule type" value="Genomic_DNA"/>
</dbReference>
<dbReference type="PIR" id="S67048">
    <property type="entry name" value="S67048"/>
</dbReference>
<dbReference type="RefSeq" id="NP_014803.1">
    <property type="nucleotide sequence ID" value="NM_001183579.1"/>
</dbReference>
<dbReference type="SMR" id="Q99189"/>
<dbReference type="BioGRID" id="34556">
    <property type="interactions" value="287"/>
</dbReference>
<dbReference type="DIP" id="DIP-2358N"/>
<dbReference type="FunCoup" id="Q99189">
    <property type="interactions" value="1420"/>
</dbReference>
<dbReference type="IntAct" id="Q99189">
    <property type="interactions" value="18"/>
</dbReference>
<dbReference type="STRING" id="4932.YOR160W"/>
<dbReference type="iPTMnet" id="Q99189"/>
<dbReference type="PaxDb" id="4932-YOR160W"/>
<dbReference type="PeptideAtlas" id="Q99189"/>
<dbReference type="EnsemblFungi" id="YOR160W_mRNA">
    <property type="protein sequence ID" value="YOR160W"/>
    <property type="gene ID" value="YOR160W"/>
</dbReference>
<dbReference type="GeneID" id="854331"/>
<dbReference type="KEGG" id="sce:YOR160W"/>
<dbReference type="AGR" id="SGD:S000005686"/>
<dbReference type="SGD" id="S000005686">
    <property type="gene designation" value="MTR10"/>
</dbReference>
<dbReference type="VEuPathDB" id="FungiDB:YOR160W"/>
<dbReference type="eggNOG" id="KOG2081">
    <property type="taxonomic scope" value="Eukaryota"/>
</dbReference>
<dbReference type="GeneTree" id="ENSGT00530000063347"/>
<dbReference type="HOGENOM" id="CLU_005996_0_0_1"/>
<dbReference type="InParanoid" id="Q99189"/>
<dbReference type="OMA" id="LECITSW"/>
<dbReference type="OrthoDB" id="435593at2759"/>
<dbReference type="BioCyc" id="YEAST:G3O-33677-MONOMER"/>
<dbReference type="BioGRID-ORCS" id="854331">
    <property type="hits" value="0 hits in 10 CRISPR screens"/>
</dbReference>
<dbReference type="PRO" id="PR:Q99189"/>
<dbReference type="Proteomes" id="UP000002311">
    <property type="component" value="Chromosome XV"/>
</dbReference>
<dbReference type="RNAct" id="Q99189">
    <property type="molecule type" value="protein"/>
</dbReference>
<dbReference type="GO" id="GO:0005737">
    <property type="term" value="C:cytoplasm"/>
    <property type="evidence" value="ECO:0000314"/>
    <property type="project" value="SGD"/>
</dbReference>
<dbReference type="GO" id="GO:0034399">
    <property type="term" value="C:nuclear periphery"/>
    <property type="evidence" value="ECO:0007005"/>
    <property type="project" value="SGD"/>
</dbReference>
<dbReference type="GO" id="GO:0005634">
    <property type="term" value="C:nucleus"/>
    <property type="evidence" value="ECO:0000314"/>
    <property type="project" value="SGD"/>
</dbReference>
<dbReference type="GO" id="GO:0008139">
    <property type="term" value="F:nuclear localization sequence binding"/>
    <property type="evidence" value="ECO:0000314"/>
    <property type="project" value="SGD"/>
</dbReference>
<dbReference type="GO" id="GO:0031267">
    <property type="term" value="F:small GTPase binding"/>
    <property type="evidence" value="ECO:0007669"/>
    <property type="project" value="InterPro"/>
</dbReference>
<dbReference type="GO" id="GO:0006606">
    <property type="term" value="P:protein import into nucleus"/>
    <property type="evidence" value="ECO:0000314"/>
    <property type="project" value="SGD"/>
</dbReference>
<dbReference type="GO" id="GO:0006404">
    <property type="term" value="P:RNA import into nucleus"/>
    <property type="evidence" value="ECO:0000315"/>
    <property type="project" value="SGD"/>
</dbReference>
<dbReference type="GO" id="GO:0006403">
    <property type="term" value="P:RNA localization"/>
    <property type="evidence" value="ECO:0000315"/>
    <property type="project" value="SGD"/>
</dbReference>
<dbReference type="GO" id="GO:0061015">
    <property type="term" value="P:snRNA import into nucleus"/>
    <property type="evidence" value="ECO:0000315"/>
    <property type="project" value="SGD"/>
</dbReference>
<dbReference type="GO" id="GO:0035719">
    <property type="term" value="P:tRNA import into nucleus"/>
    <property type="evidence" value="ECO:0000315"/>
    <property type="project" value="SGD"/>
</dbReference>
<dbReference type="GO" id="GO:0051031">
    <property type="term" value="P:tRNA transport"/>
    <property type="evidence" value="ECO:0000315"/>
    <property type="project" value="SGD"/>
</dbReference>
<dbReference type="FunFam" id="1.25.10.10:FF:000266">
    <property type="entry name" value="mRNA transport regulator MTR10"/>
    <property type="match status" value="1"/>
</dbReference>
<dbReference type="Gene3D" id="1.25.10.10">
    <property type="entry name" value="Leucine-rich Repeat Variant"/>
    <property type="match status" value="1"/>
</dbReference>
<dbReference type="InterPro" id="IPR011989">
    <property type="entry name" value="ARM-like"/>
</dbReference>
<dbReference type="InterPro" id="IPR016024">
    <property type="entry name" value="ARM-type_fold"/>
</dbReference>
<dbReference type="InterPro" id="IPR013598">
    <property type="entry name" value="Exportin-1/Importin-b-like"/>
</dbReference>
<dbReference type="InterPro" id="IPR001494">
    <property type="entry name" value="Importin-beta_N"/>
</dbReference>
<dbReference type="InterPro" id="IPR051345">
    <property type="entry name" value="Importin_beta-like_NTR"/>
</dbReference>
<dbReference type="PANTHER" id="PTHR12363:SF53">
    <property type="entry name" value="MRNA TRANSPORT REGULATOR MTR10"/>
    <property type="match status" value="1"/>
</dbReference>
<dbReference type="PANTHER" id="PTHR12363">
    <property type="entry name" value="TRANSPORTIN 3 AND IMPORTIN 13"/>
    <property type="match status" value="1"/>
</dbReference>
<dbReference type="Pfam" id="PF03810">
    <property type="entry name" value="IBN_N"/>
    <property type="match status" value="1"/>
</dbReference>
<dbReference type="Pfam" id="PF24138">
    <property type="entry name" value="TPR_TNPO3_IPO13_2nd"/>
    <property type="match status" value="1"/>
</dbReference>
<dbReference type="Pfam" id="PF24140">
    <property type="entry name" value="TPR_TNPO3_IPO13_3rd"/>
    <property type="match status" value="1"/>
</dbReference>
<dbReference type="Pfam" id="PF08389">
    <property type="entry name" value="Xpo1"/>
    <property type="match status" value="1"/>
</dbReference>
<dbReference type="SMART" id="SM00913">
    <property type="entry name" value="IBN_N"/>
    <property type="match status" value="1"/>
</dbReference>
<dbReference type="SUPFAM" id="SSF48371">
    <property type="entry name" value="ARM repeat"/>
    <property type="match status" value="1"/>
</dbReference>
<gene>
    <name type="primary">MTR10</name>
    <name type="ordered locus">YOR160W</name>
</gene>
<evidence type="ECO:0000269" key="1">
    <source>
    </source>
</evidence>
<evidence type="ECO:0000305" key="2"/>
<proteinExistence type="evidence at protein level"/>
<accession>Q99189</accession>
<accession>D6W2L7</accession>
<keyword id="KW-0539">Nucleus</keyword>
<keyword id="KW-1185">Reference proteome</keyword>
<comment type="function">
    <text>Involved in mRNA transport from nucleus to cytoplasm.</text>
</comment>
<comment type="subcellular location">
    <subcellularLocation>
        <location evidence="2">Nucleus</location>
    </subcellularLocation>
</comment>
<comment type="miscellaneous">
    <text evidence="1">Present with 6340 molecules/cell in log phase SD medium.</text>
</comment>
<sequence length="972" mass="110745">MDNLQVSDIETALQCISSTASQDDKNKALQFLEQFQRSTVAWSICNEILSKEDPTNALLELNIFAAQTLRNKVTYDLSQLENNLPQFKDSLLTLLLSHNQKLIITQLNVALARLAIQFLEWQNPIFEIISLLNSSPSILLNFLRILPEETLDIASTSLTEVEFNSRIHELIDPIAEDVLKFLVSCIDLLQNTDGNSSSSISLEQILRCLNSWSYEFPVEQLLTVQPLINLVFETISNGNESDMEAFDSAIDCLCVILRESRDTTNEQLISALFHQLMLLQEKLLPTLFTDHPLNDEYDDDLLEGMTRLFVEAGEAWSVVISKNPDFFKPMVLVLLMLTCKNEDLDVVSYTFPFWFNFKQSLVLPRYQESRKAYSDIFVKLINGIITHLQYPSGQFSSKEEEDKFKDFRYHMGDVLKDCTAVVGTSEALSQPLIRIKSAIENNNSWQIMEAPLFSLRTMAKEISLTENTILPEIIKIICNLPEQAKIRYASTLVLGRYTEWTAKHPELLEVQLQYIFNGFQLHEGSSDMQSIITASSHALMFFCSDCSKLLVGYIDQLINFFLNVQSSIDIESQFELCQGLSAVINNQPEAKVSVIFQKLVDDNLRQIEALIPQWKANPTLLAPQIADKIDLLYALFEELKPRYNYPQQGSEPLLPRIEFIWKALRTLLVDAGAMTDSIIVERVAKLLRRIFERFHVFCEPILPSVAEFLIQGYLTTGFGSYLWCSGSLIVIFGDDESFPISPSLKDAVWKFALSQCETFILNFNKFDKLQLNDYHEAIIDFFSLISDLIMFYPGAFLNSTELLGPVLNVALECVNKLDNYDAYICILRCLDDIISWGFKTPPISTVSIEIVPDEWRKQVINEVVIAHGNQLILVLFIGLVTTFENTAHSDAISCIVKCLRILTEANNNDATICIDWIYKVVEQLGQVTLNERDNLAKAVVEGLNSKDYRKVREGIRAFVGWYSRKNINSRFE</sequence>
<feature type="chain" id="PRO_0000096632" description="mRNA transport regulator MTR10">
    <location>
        <begin position="1"/>
        <end position="972"/>
    </location>
</feature>